<organism>
    <name type="scientific">Lactobacillus helveticus (strain DPC 4571)</name>
    <dbReference type="NCBI Taxonomy" id="405566"/>
    <lineage>
        <taxon>Bacteria</taxon>
        <taxon>Bacillati</taxon>
        <taxon>Bacillota</taxon>
        <taxon>Bacilli</taxon>
        <taxon>Lactobacillales</taxon>
        <taxon>Lactobacillaceae</taxon>
        <taxon>Lactobacillus</taxon>
    </lineage>
</organism>
<comment type="function">
    <text evidence="1">One of the primary rRNA binding proteins, it binds directly to 16S rRNA where it helps nucleate assembly of the platform of the 30S subunit by binding and bridging several RNA helices of the 16S rRNA.</text>
</comment>
<comment type="function">
    <text evidence="1">Forms an intersubunit bridge (bridge B4) with the 23S rRNA of the 50S subunit in the ribosome.</text>
</comment>
<comment type="subunit">
    <text evidence="1">Part of the 30S ribosomal subunit. Forms a bridge to the 50S subunit in the 70S ribosome, contacting the 23S rRNA.</text>
</comment>
<comment type="similarity">
    <text evidence="1">Belongs to the universal ribosomal protein uS15 family.</text>
</comment>
<protein>
    <recommendedName>
        <fullName evidence="1">Small ribosomal subunit protein uS15</fullName>
    </recommendedName>
    <alternativeName>
        <fullName evidence="2">30S ribosomal protein S15</fullName>
    </alternativeName>
</protein>
<evidence type="ECO:0000255" key="1">
    <source>
        <dbReference type="HAMAP-Rule" id="MF_01343"/>
    </source>
</evidence>
<evidence type="ECO:0000305" key="2"/>
<name>RS15_LACH4</name>
<keyword id="KW-0687">Ribonucleoprotein</keyword>
<keyword id="KW-0689">Ribosomal protein</keyword>
<keyword id="KW-0694">RNA-binding</keyword>
<keyword id="KW-0699">rRNA-binding</keyword>
<dbReference type="EMBL" id="CP000517">
    <property type="protein sequence ID" value="ABX27007.1"/>
    <property type="molecule type" value="Genomic_DNA"/>
</dbReference>
<dbReference type="RefSeq" id="WP_003628079.1">
    <property type="nucleotide sequence ID" value="NC_010080.1"/>
</dbReference>
<dbReference type="SMR" id="A8YUR9"/>
<dbReference type="GeneID" id="83725639"/>
<dbReference type="KEGG" id="lhe:lhv_0892"/>
<dbReference type="eggNOG" id="COG0184">
    <property type="taxonomic scope" value="Bacteria"/>
</dbReference>
<dbReference type="HOGENOM" id="CLU_148518_0_0_9"/>
<dbReference type="Proteomes" id="UP000000790">
    <property type="component" value="Chromosome"/>
</dbReference>
<dbReference type="GO" id="GO:0022627">
    <property type="term" value="C:cytosolic small ribosomal subunit"/>
    <property type="evidence" value="ECO:0007669"/>
    <property type="project" value="TreeGrafter"/>
</dbReference>
<dbReference type="GO" id="GO:0019843">
    <property type="term" value="F:rRNA binding"/>
    <property type="evidence" value="ECO:0007669"/>
    <property type="project" value="UniProtKB-UniRule"/>
</dbReference>
<dbReference type="GO" id="GO:0003735">
    <property type="term" value="F:structural constituent of ribosome"/>
    <property type="evidence" value="ECO:0007669"/>
    <property type="project" value="InterPro"/>
</dbReference>
<dbReference type="GO" id="GO:0006412">
    <property type="term" value="P:translation"/>
    <property type="evidence" value="ECO:0007669"/>
    <property type="project" value="UniProtKB-UniRule"/>
</dbReference>
<dbReference type="CDD" id="cd00353">
    <property type="entry name" value="Ribosomal_S15p_S13e"/>
    <property type="match status" value="1"/>
</dbReference>
<dbReference type="FunFam" id="1.10.287.10:FF:000002">
    <property type="entry name" value="30S ribosomal protein S15"/>
    <property type="match status" value="1"/>
</dbReference>
<dbReference type="Gene3D" id="6.10.250.3130">
    <property type="match status" value="1"/>
</dbReference>
<dbReference type="Gene3D" id="1.10.287.10">
    <property type="entry name" value="S15/NS1, RNA-binding"/>
    <property type="match status" value="1"/>
</dbReference>
<dbReference type="HAMAP" id="MF_01343_B">
    <property type="entry name" value="Ribosomal_uS15_B"/>
    <property type="match status" value="1"/>
</dbReference>
<dbReference type="InterPro" id="IPR000589">
    <property type="entry name" value="Ribosomal_uS15"/>
</dbReference>
<dbReference type="InterPro" id="IPR005290">
    <property type="entry name" value="Ribosomal_uS15_bac-type"/>
</dbReference>
<dbReference type="InterPro" id="IPR009068">
    <property type="entry name" value="uS15_NS1_RNA-bd_sf"/>
</dbReference>
<dbReference type="NCBIfam" id="TIGR00952">
    <property type="entry name" value="S15_bact"/>
    <property type="match status" value="1"/>
</dbReference>
<dbReference type="PANTHER" id="PTHR23321">
    <property type="entry name" value="RIBOSOMAL PROTEIN S15, BACTERIAL AND ORGANELLAR"/>
    <property type="match status" value="1"/>
</dbReference>
<dbReference type="PANTHER" id="PTHR23321:SF26">
    <property type="entry name" value="SMALL RIBOSOMAL SUBUNIT PROTEIN US15M"/>
    <property type="match status" value="1"/>
</dbReference>
<dbReference type="Pfam" id="PF00312">
    <property type="entry name" value="Ribosomal_S15"/>
    <property type="match status" value="1"/>
</dbReference>
<dbReference type="SMART" id="SM01387">
    <property type="entry name" value="Ribosomal_S15"/>
    <property type="match status" value="1"/>
</dbReference>
<dbReference type="SUPFAM" id="SSF47060">
    <property type="entry name" value="S15/NS1 RNA-binding domain"/>
    <property type="match status" value="1"/>
</dbReference>
<dbReference type="PROSITE" id="PS00362">
    <property type="entry name" value="RIBOSOMAL_S15"/>
    <property type="match status" value="1"/>
</dbReference>
<feature type="chain" id="PRO_1000073335" description="Small ribosomal subunit protein uS15">
    <location>
        <begin position="1"/>
        <end position="89"/>
    </location>
</feature>
<reference key="1">
    <citation type="journal article" date="2008" name="J. Bacteriol.">
        <title>Genome sequence of Lactobacillus helveticus: an organism distinguished by selective gene loss and IS element expansion.</title>
        <authorList>
            <person name="Callanan M."/>
            <person name="Kaleta P."/>
            <person name="O'Callaghan J."/>
            <person name="O'Sullivan O."/>
            <person name="Jordan K."/>
            <person name="McAuliffe O."/>
            <person name="Sangrador-Vegas A."/>
            <person name="Slattery L."/>
            <person name="Fitzgerald G.F."/>
            <person name="Beresford T."/>
            <person name="Ross R.P."/>
        </authorList>
    </citation>
    <scope>NUCLEOTIDE SEQUENCE [LARGE SCALE GENOMIC DNA]</scope>
    <source>
        <strain>DPC 4571</strain>
    </source>
</reference>
<accession>A8YUR9</accession>
<proteinExistence type="inferred from homology"/>
<gene>
    <name evidence="1" type="primary">rpsO</name>
    <name type="ordered locus">lhv_0892</name>
</gene>
<sequence>MAISKTEKDNIIKEYATHEGDTGSVEVQVALLTADINNLTDHMKSHKHDHHSYVGLLKKIGHRRNLLRYLENNDINRYRELIKKLGLRR</sequence>